<dbReference type="EMBL" id="AE014295">
    <property type="protein sequence ID" value="AAN23965.1"/>
    <property type="molecule type" value="Genomic_DNA"/>
</dbReference>
<dbReference type="RefSeq" id="NP_695329.1">
    <property type="nucleotide sequence ID" value="NC_004307.2"/>
</dbReference>
<dbReference type="RefSeq" id="WP_007055411.1">
    <property type="nucleotide sequence ID" value="NC_004307.2"/>
</dbReference>
<dbReference type="SMR" id="Q8G7Y4"/>
<dbReference type="STRING" id="206672.BL0100"/>
<dbReference type="EnsemblBacteria" id="AAN23965">
    <property type="protein sequence ID" value="AAN23965"/>
    <property type="gene ID" value="BL0100"/>
</dbReference>
<dbReference type="KEGG" id="blo:BL0100"/>
<dbReference type="PATRIC" id="fig|206672.9.peg.107"/>
<dbReference type="HOGENOM" id="CLU_066632_1_1_11"/>
<dbReference type="OrthoDB" id="9812244at2"/>
<dbReference type="PhylomeDB" id="Q8G7Y4"/>
<dbReference type="Proteomes" id="UP000000439">
    <property type="component" value="Chromosome"/>
</dbReference>
<dbReference type="GO" id="GO:0043590">
    <property type="term" value="C:bacterial nucleoid"/>
    <property type="evidence" value="ECO:0007669"/>
    <property type="project" value="TreeGrafter"/>
</dbReference>
<dbReference type="GO" id="GO:0006310">
    <property type="term" value="P:DNA recombination"/>
    <property type="evidence" value="ECO:0007669"/>
    <property type="project" value="UniProtKB-UniRule"/>
</dbReference>
<dbReference type="GO" id="GO:0006302">
    <property type="term" value="P:double-strand break repair"/>
    <property type="evidence" value="ECO:0007669"/>
    <property type="project" value="TreeGrafter"/>
</dbReference>
<dbReference type="Gene3D" id="2.40.50.140">
    <property type="entry name" value="Nucleic acid-binding proteins"/>
    <property type="match status" value="1"/>
</dbReference>
<dbReference type="Gene3D" id="1.20.1440.120">
    <property type="entry name" value="Recombination protein O, C-terminal domain"/>
    <property type="match status" value="1"/>
</dbReference>
<dbReference type="HAMAP" id="MF_00201">
    <property type="entry name" value="RecO"/>
    <property type="match status" value="1"/>
</dbReference>
<dbReference type="InterPro" id="IPR037278">
    <property type="entry name" value="ARFGAP/RecO"/>
</dbReference>
<dbReference type="InterPro" id="IPR022572">
    <property type="entry name" value="DNA_rep/recomb_RecO_N"/>
</dbReference>
<dbReference type="InterPro" id="IPR012340">
    <property type="entry name" value="NA-bd_OB-fold"/>
</dbReference>
<dbReference type="InterPro" id="IPR003717">
    <property type="entry name" value="RecO"/>
</dbReference>
<dbReference type="InterPro" id="IPR042242">
    <property type="entry name" value="RecO_C"/>
</dbReference>
<dbReference type="NCBIfam" id="TIGR00613">
    <property type="entry name" value="reco"/>
    <property type="match status" value="1"/>
</dbReference>
<dbReference type="PANTHER" id="PTHR33991">
    <property type="entry name" value="DNA REPAIR PROTEIN RECO"/>
    <property type="match status" value="1"/>
</dbReference>
<dbReference type="PANTHER" id="PTHR33991:SF1">
    <property type="entry name" value="DNA REPAIR PROTEIN RECO"/>
    <property type="match status" value="1"/>
</dbReference>
<dbReference type="Pfam" id="PF02565">
    <property type="entry name" value="RecO_C"/>
    <property type="match status" value="1"/>
</dbReference>
<dbReference type="Pfam" id="PF11967">
    <property type="entry name" value="RecO_N"/>
    <property type="match status" value="1"/>
</dbReference>
<dbReference type="SUPFAM" id="SSF57863">
    <property type="entry name" value="ArfGap/RecO-like zinc finger"/>
    <property type="match status" value="1"/>
</dbReference>
<dbReference type="SUPFAM" id="SSF50249">
    <property type="entry name" value="Nucleic acid-binding proteins"/>
    <property type="match status" value="1"/>
</dbReference>
<protein>
    <recommendedName>
        <fullName evidence="1">DNA repair protein RecO</fullName>
    </recommendedName>
    <alternativeName>
        <fullName evidence="1">Recombination protein O</fullName>
    </alternativeName>
</protein>
<proteinExistence type="inferred from homology"/>
<reference key="1">
    <citation type="journal article" date="2002" name="Proc. Natl. Acad. Sci. U.S.A.">
        <title>The genome sequence of Bifidobacterium longum reflects its adaptation to the human gastrointestinal tract.</title>
        <authorList>
            <person name="Schell M.A."/>
            <person name="Karmirantzou M."/>
            <person name="Snel B."/>
            <person name="Vilanova D."/>
            <person name="Berger B."/>
            <person name="Pessi G."/>
            <person name="Zwahlen M.-C."/>
            <person name="Desiere F."/>
            <person name="Bork P."/>
            <person name="Delley M."/>
            <person name="Pridmore R.D."/>
            <person name="Arigoni F."/>
        </authorList>
    </citation>
    <scope>NUCLEOTIDE SEQUENCE [LARGE SCALE GENOMIC DNA]</scope>
    <source>
        <strain>NCC 2705</strain>
    </source>
</reference>
<comment type="function">
    <text evidence="1">Involved in DNA repair and RecF pathway recombination.</text>
</comment>
<comment type="similarity">
    <text evidence="1">Belongs to the RecO family.</text>
</comment>
<accession>Q8G7Y4</accession>
<keyword id="KW-0227">DNA damage</keyword>
<keyword id="KW-0233">DNA recombination</keyword>
<keyword id="KW-0234">DNA repair</keyword>
<keyword id="KW-1185">Reference proteome</keyword>
<feature type="chain" id="PRO_0000204935" description="DNA repair protein RecO">
    <location>
        <begin position="1"/>
        <end position="239"/>
    </location>
</feature>
<gene>
    <name evidence="1" type="primary">recO</name>
    <name type="ordered locus">BL0100</name>
</gene>
<evidence type="ECO:0000255" key="1">
    <source>
        <dbReference type="HAMAP-Rule" id="MF_00201"/>
    </source>
</evidence>
<name>RECO_BIFLO</name>
<sequence length="239" mass="26123">MSLYRDEGVVLRTSKLGEADRIITILTRGHGKIRAVAKGVRRTKSRFGARLEPFMRVDVLIAEGRSLDVVSQAEAVAAYGAPIAADYAAYEAANVIVETIDKIASTEHEQLPNQYRLLIGALNALAKQSHAPQAIGDSYVMRALALAGWTPRLGTCVVCGKAEPAYLSIASGGVMCEADHTTDARRIAPFVLNQFDALIRGDWSVLDAAPVERVVQELVEDWGEYYLERPIRSLRLIDS</sequence>
<organism>
    <name type="scientific">Bifidobacterium longum (strain NCC 2705)</name>
    <dbReference type="NCBI Taxonomy" id="206672"/>
    <lineage>
        <taxon>Bacteria</taxon>
        <taxon>Bacillati</taxon>
        <taxon>Actinomycetota</taxon>
        <taxon>Actinomycetes</taxon>
        <taxon>Bifidobacteriales</taxon>
        <taxon>Bifidobacteriaceae</taxon>
        <taxon>Bifidobacterium</taxon>
    </lineage>
</organism>